<comment type="function">
    <text evidence="1">Cleaves the N-terminal amino acid of tripeptides.</text>
</comment>
<comment type="catalytic activity">
    <reaction evidence="1">
        <text>Release of the N-terminal residue from a tripeptide.</text>
        <dbReference type="EC" id="3.4.11.4"/>
    </reaction>
</comment>
<comment type="cofactor">
    <cofactor evidence="1">
        <name>Zn(2+)</name>
        <dbReference type="ChEBI" id="CHEBI:29105"/>
    </cofactor>
    <text evidence="1">Binds 2 Zn(2+) ions per subunit.</text>
</comment>
<comment type="subcellular location">
    <subcellularLocation>
        <location evidence="1">Cytoplasm</location>
    </subcellularLocation>
</comment>
<comment type="similarity">
    <text evidence="1">Belongs to the peptidase M20B family.</text>
</comment>
<protein>
    <recommendedName>
        <fullName evidence="1">Peptidase T</fullName>
        <ecNumber evidence="1">3.4.11.4</ecNumber>
    </recommendedName>
    <alternativeName>
        <fullName evidence="1">Aminotripeptidase</fullName>
        <shortName evidence="1">Tripeptidase</shortName>
    </alternativeName>
    <alternativeName>
        <fullName evidence="1">Tripeptide aminopeptidase</fullName>
    </alternativeName>
</protein>
<dbReference type="EC" id="3.4.11.4" evidence="1"/>
<dbReference type="EMBL" id="CP000903">
    <property type="protein sequence ID" value="ABY44685.1"/>
    <property type="molecule type" value="Genomic_DNA"/>
</dbReference>
<dbReference type="RefSeq" id="WP_012261523.1">
    <property type="nucleotide sequence ID" value="NC_010184.1"/>
</dbReference>
<dbReference type="SMR" id="A9VR36"/>
<dbReference type="MEROPS" id="M20.003"/>
<dbReference type="KEGG" id="bwe:BcerKBAB4_3512"/>
<dbReference type="eggNOG" id="COG2195">
    <property type="taxonomic scope" value="Bacteria"/>
</dbReference>
<dbReference type="HOGENOM" id="CLU_053676_0_0_9"/>
<dbReference type="Proteomes" id="UP000002154">
    <property type="component" value="Chromosome"/>
</dbReference>
<dbReference type="GO" id="GO:0005829">
    <property type="term" value="C:cytosol"/>
    <property type="evidence" value="ECO:0007669"/>
    <property type="project" value="TreeGrafter"/>
</dbReference>
<dbReference type="GO" id="GO:0008237">
    <property type="term" value="F:metallopeptidase activity"/>
    <property type="evidence" value="ECO:0007669"/>
    <property type="project" value="UniProtKB-KW"/>
</dbReference>
<dbReference type="GO" id="GO:0045148">
    <property type="term" value="F:tripeptide aminopeptidase activity"/>
    <property type="evidence" value="ECO:0007669"/>
    <property type="project" value="UniProtKB-UniRule"/>
</dbReference>
<dbReference type="GO" id="GO:0008270">
    <property type="term" value="F:zinc ion binding"/>
    <property type="evidence" value="ECO:0007669"/>
    <property type="project" value="UniProtKB-UniRule"/>
</dbReference>
<dbReference type="GO" id="GO:0043171">
    <property type="term" value="P:peptide catabolic process"/>
    <property type="evidence" value="ECO:0007669"/>
    <property type="project" value="UniProtKB-UniRule"/>
</dbReference>
<dbReference type="GO" id="GO:0006508">
    <property type="term" value="P:proteolysis"/>
    <property type="evidence" value="ECO:0007669"/>
    <property type="project" value="UniProtKB-UniRule"/>
</dbReference>
<dbReference type="CDD" id="cd03892">
    <property type="entry name" value="M20_peptT"/>
    <property type="match status" value="1"/>
</dbReference>
<dbReference type="FunFam" id="3.30.70.360:FF:000002">
    <property type="entry name" value="Peptidase T"/>
    <property type="match status" value="1"/>
</dbReference>
<dbReference type="Gene3D" id="3.30.70.360">
    <property type="match status" value="1"/>
</dbReference>
<dbReference type="Gene3D" id="3.40.630.10">
    <property type="entry name" value="Zn peptidases"/>
    <property type="match status" value="1"/>
</dbReference>
<dbReference type="HAMAP" id="MF_00550">
    <property type="entry name" value="Aminopeptidase_M20"/>
    <property type="match status" value="1"/>
</dbReference>
<dbReference type="InterPro" id="IPR001261">
    <property type="entry name" value="ArgE/DapE_CS"/>
</dbReference>
<dbReference type="InterPro" id="IPR036264">
    <property type="entry name" value="Bact_exopeptidase_dim_dom"/>
</dbReference>
<dbReference type="InterPro" id="IPR002933">
    <property type="entry name" value="Peptidase_M20"/>
</dbReference>
<dbReference type="InterPro" id="IPR011650">
    <property type="entry name" value="Peptidase_M20_dimer"/>
</dbReference>
<dbReference type="InterPro" id="IPR010161">
    <property type="entry name" value="Peptidase_M20B"/>
</dbReference>
<dbReference type="NCBIfam" id="TIGR01882">
    <property type="entry name" value="peptidase-T"/>
    <property type="match status" value="1"/>
</dbReference>
<dbReference type="NCBIfam" id="NF003976">
    <property type="entry name" value="PRK05469.1"/>
    <property type="match status" value="1"/>
</dbReference>
<dbReference type="NCBIfam" id="NF009920">
    <property type="entry name" value="PRK13381.1"/>
    <property type="match status" value="1"/>
</dbReference>
<dbReference type="PANTHER" id="PTHR42994">
    <property type="entry name" value="PEPTIDASE T"/>
    <property type="match status" value="1"/>
</dbReference>
<dbReference type="PANTHER" id="PTHR42994:SF1">
    <property type="entry name" value="PEPTIDASE T"/>
    <property type="match status" value="1"/>
</dbReference>
<dbReference type="Pfam" id="PF07687">
    <property type="entry name" value="M20_dimer"/>
    <property type="match status" value="1"/>
</dbReference>
<dbReference type="Pfam" id="PF01546">
    <property type="entry name" value="Peptidase_M20"/>
    <property type="match status" value="1"/>
</dbReference>
<dbReference type="PIRSF" id="PIRSF037215">
    <property type="entry name" value="Peptidase_M20B"/>
    <property type="match status" value="1"/>
</dbReference>
<dbReference type="SUPFAM" id="SSF55031">
    <property type="entry name" value="Bacterial exopeptidase dimerisation domain"/>
    <property type="match status" value="1"/>
</dbReference>
<dbReference type="SUPFAM" id="SSF53187">
    <property type="entry name" value="Zn-dependent exopeptidases"/>
    <property type="match status" value="1"/>
</dbReference>
<dbReference type="PROSITE" id="PS00758">
    <property type="entry name" value="ARGE_DAPE_CPG2_1"/>
    <property type="match status" value="1"/>
</dbReference>
<dbReference type="PROSITE" id="PS00759">
    <property type="entry name" value="ARGE_DAPE_CPG2_2"/>
    <property type="match status" value="1"/>
</dbReference>
<name>PEPT_BACMK</name>
<sequence>MKQELIERFTRYVKIDTQSNEESHTVPTTPGQIEFGKLLVEELKEIGLSEVTMDEKGYVMATLPANTDKDVPVIGFLAHLDTATDFTGKNVKPQIHENFDGNAITLNEELNVVLTPEQFPELPSYKGHTIITTDGTTLLGADDKAGLTEIMVAMNYLIHNPQIKHGKIRVAFTPDEEIGRGPSHFDVEAFGASFAYTMDGGPLGGLEYESFNAASAKLTFRGTNTHPGTAKNKMRNASKLAMEFDRQLPVEEAPEYTEGYEGFYHLLSLNGDVEQSKAYYIIRDFDRNHFEARKNNIKDIVKNMQEKYGEDAIVLEMNDQYYNMLEKIEPVREIVDIAYEAMKSLNIEPNIHPIRGGTDGSQLSYMGLPTPNIFTGGENYHGKFEYVSVDTMEKAVQVIVEIARRFEEQA</sequence>
<gene>
    <name evidence="1" type="primary">pepT</name>
    <name type="ordered locus">BcerKBAB4_3512</name>
</gene>
<evidence type="ECO:0000255" key="1">
    <source>
        <dbReference type="HAMAP-Rule" id="MF_00550"/>
    </source>
</evidence>
<feature type="chain" id="PRO_1000129024" description="Peptidase T">
    <location>
        <begin position="1"/>
        <end position="410"/>
    </location>
</feature>
<feature type="active site" evidence="1">
    <location>
        <position position="81"/>
    </location>
</feature>
<feature type="active site" description="Proton acceptor" evidence="1">
    <location>
        <position position="176"/>
    </location>
</feature>
<feature type="binding site" evidence="1">
    <location>
        <position position="79"/>
    </location>
    <ligand>
        <name>Zn(2+)</name>
        <dbReference type="ChEBI" id="CHEBI:29105"/>
        <label>1</label>
    </ligand>
</feature>
<feature type="binding site" evidence="1">
    <location>
        <position position="142"/>
    </location>
    <ligand>
        <name>Zn(2+)</name>
        <dbReference type="ChEBI" id="CHEBI:29105"/>
        <label>1</label>
    </ligand>
</feature>
<feature type="binding site" evidence="1">
    <location>
        <position position="142"/>
    </location>
    <ligand>
        <name>Zn(2+)</name>
        <dbReference type="ChEBI" id="CHEBI:29105"/>
        <label>2</label>
    </ligand>
</feature>
<feature type="binding site" evidence="1">
    <location>
        <position position="177"/>
    </location>
    <ligand>
        <name>Zn(2+)</name>
        <dbReference type="ChEBI" id="CHEBI:29105"/>
        <label>2</label>
    </ligand>
</feature>
<feature type="binding site" evidence="1">
    <location>
        <position position="199"/>
    </location>
    <ligand>
        <name>Zn(2+)</name>
        <dbReference type="ChEBI" id="CHEBI:29105"/>
        <label>1</label>
    </ligand>
</feature>
<feature type="binding site" evidence="1">
    <location>
        <position position="381"/>
    </location>
    <ligand>
        <name>Zn(2+)</name>
        <dbReference type="ChEBI" id="CHEBI:29105"/>
        <label>2</label>
    </ligand>
</feature>
<accession>A9VR36</accession>
<organism>
    <name type="scientific">Bacillus mycoides (strain KBAB4)</name>
    <name type="common">Bacillus weihenstephanensis</name>
    <dbReference type="NCBI Taxonomy" id="315730"/>
    <lineage>
        <taxon>Bacteria</taxon>
        <taxon>Bacillati</taxon>
        <taxon>Bacillota</taxon>
        <taxon>Bacilli</taxon>
        <taxon>Bacillales</taxon>
        <taxon>Bacillaceae</taxon>
        <taxon>Bacillus</taxon>
        <taxon>Bacillus cereus group</taxon>
    </lineage>
</organism>
<keyword id="KW-0031">Aminopeptidase</keyword>
<keyword id="KW-0963">Cytoplasm</keyword>
<keyword id="KW-0378">Hydrolase</keyword>
<keyword id="KW-0479">Metal-binding</keyword>
<keyword id="KW-0482">Metalloprotease</keyword>
<keyword id="KW-0645">Protease</keyword>
<keyword id="KW-0862">Zinc</keyword>
<reference key="1">
    <citation type="journal article" date="2008" name="Chem. Biol. Interact.">
        <title>Extending the Bacillus cereus group genomics to putative food-borne pathogens of different toxicity.</title>
        <authorList>
            <person name="Lapidus A."/>
            <person name="Goltsman E."/>
            <person name="Auger S."/>
            <person name="Galleron N."/>
            <person name="Segurens B."/>
            <person name="Dossat C."/>
            <person name="Land M.L."/>
            <person name="Broussolle V."/>
            <person name="Brillard J."/>
            <person name="Guinebretiere M.-H."/>
            <person name="Sanchis V."/>
            <person name="Nguen-the C."/>
            <person name="Lereclus D."/>
            <person name="Richardson P."/>
            <person name="Wincker P."/>
            <person name="Weissenbach J."/>
            <person name="Ehrlich S.D."/>
            <person name="Sorokin A."/>
        </authorList>
    </citation>
    <scope>NUCLEOTIDE SEQUENCE [LARGE SCALE GENOMIC DNA]</scope>
    <source>
        <strain>KBAB4</strain>
    </source>
</reference>
<proteinExistence type="inferred from homology"/>